<sequence>MKFLTVAAAIFASTSLAVPTNNHNGGGACVPRPNPGNSNTSSAPGGNPTGGHTSSGPGTKPTGSHTSSGPATKPTDGNTSSGPGTKPTDGNTSSGIDCEVPRHAPTSGDDFKGICAAVGKQPLCCVIPVAGQDLLCQDITGGNSPSGQPTSVPGGQSTSVPGGNPTSIPGGQPTSVPGGQPTSVPGGHPTSAPTGHPTSVPGGQPTSVPGGNPTSVPGHHNPSPVGNDPSCCPSGLYSNPQCCAANVLGLADLDCSTPSQTFTTGDEFRNICATIGRQPMCCVLPVAGQAVLCEKPVGV</sequence>
<gene>
    <name evidence="6" type="primary">hyd2C</name>
    <name evidence="5" type="synonym">hyd5</name>
    <name type="ORF">BBA_00530</name>
</gene>
<keyword id="KW-0134">Cell wall</keyword>
<keyword id="KW-0968">Cytoplasmic vesicle</keyword>
<keyword id="KW-1015">Disulfide bond</keyword>
<keyword id="KW-0325">Glycoprotein</keyword>
<keyword id="KW-1185">Reference proteome</keyword>
<keyword id="KW-0964">Secreted</keyword>
<keyword id="KW-0732">Signal</keyword>
<keyword id="KW-0926">Vacuole</keyword>
<protein>
    <recommendedName>
        <fullName evidence="6">Class II hydrophobin C</fullName>
    </recommendedName>
</protein>
<evidence type="ECO:0000250" key="1">
    <source>
        <dbReference type="UniProtKB" id="Q04571"/>
    </source>
</evidence>
<evidence type="ECO:0000255" key="2"/>
<evidence type="ECO:0000255" key="3">
    <source>
        <dbReference type="PROSITE-ProRule" id="PRU00498"/>
    </source>
</evidence>
<evidence type="ECO:0000269" key="4">
    <source>
    </source>
</evidence>
<evidence type="ECO:0000303" key="5">
    <source>
    </source>
</evidence>
<evidence type="ECO:0000303" key="6">
    <source>
    </source>
</evidence>
<evidence type="ECO:0000305" key="7"/>
<evidence type="ECO:0000305" key="8">
    <source>
    </source>
</evidence>
<proteinExistence type="evidence at transcript level"/>
<comment type="function">
    <text evidence="4 8">Aerial growth, conidiation, and dispersal of filamentous fungi in the environment rely upon a capability of their secreting small amphipathic proteins called hydrophobins (HPBs) with low sequence identity. Class I can self-assemble into an outermost layer of rodlet bundles on aerial cell surfaces, conferring cellular hydrophobicity that supports fungal growth, development and dispersal; whereas Class II form highly ordered films at water-air interfaces through intermolecular interactions but contribute nothing to the rodlet structure (Probable). Hyd2C contributes to certain cell wall-related features, such as hydrophobicity but is not involved in cell wall-related events during fungal proliferation in host hemocoel (PubMed:39724799). Does not contribute to conidial hydrophobicity (PubMed:39724799). Involved actively in the asexual development (PubMed:39724799).</text>
</comment>
<comment type="subcellular location">
    <subcellularLocation>
        <location evidence="4">Secreted</location>
    </subcellularLocation>
    <subcellularLocation>
        <location evidence="4">Secreted</location>
        <location evidence="4">Cell wall</location>
    </subcellularLocation>
    <subcellularLocation>
        <location evidence="4">Vacuole</location>
    </subcellularLocation>
    <subcellularLocation>
        <location evidence="4">Cytoplasmic vesicle</location>
    </subcellularLocation>
    <text evidence="4">Accumulates exclusively on the cell walls of aerial hyphae and conidia and in the vacuoles and vesicles of hyphae and blastospores.</text>
</comment>
<comment type="induction">
    <text evidence="4">Under normal conditions on SDAY medium (Sabouraud dextrose agar plus 1% yeast extract), hyd2C is up-regulated at transcriptional level during the first five days of incubation. Hyd1A is the most active at transcription level under normal culture conditions, followed by hyd1B, hyd1E, hyd2A and hyd2C in order.</text>
</comment>
<comment type="disruption phenotype">
    <text evidence="4">Compromises aerial conidiation and submerged blastospore production (PubMed:39724799). Does not affect radial growth and multiple stress responses (PubMed:39724799).</text>
</comment>
<comment type="similarity">
    <text evidence="7">Belongs to the cerato-ulmin hydrophobin family.</text>
</comment>
<feature type="signal peptide" evidence="2">
    <location>
        <begin position="1"/>
        <end position="17"/>
    </location>
</feature>
<feature type="chain" id="PRO_5003782574" description="Class II hydrophobin C">
    <location>
        <begin position="18"/>
        <end position="299"/>
    </location>
</feature>
<feature type="glycosylation site" description="N-linked (GlcNAc...) asparagine" evidence="3">
    <location>
        <position position="39"/>
    </location>
</feature>
<feature type="glycosylation site" description="N-linked (GlcNAc...) asparagine" evidence="3">
    <location>
        <position position="78"/>
    </location>
</feature>
<feature type="glycosylation site" description="N-linked (GlcNAc...) asparagine" evidence="3">
    <location>
        <position position="91"/>
    </location>
</feature>
<feature type="disulfide bond" evidence="1">
    <location>
        <begin position="232"/>
        <end position="281"/>
    </location>
</feature>
<feature type="disulfide bond" evidence="1">
    <location>
        <begin position="242"/>
        <end position="272"/>
    </location>
</feature>
<feature type="disulfide bond" evidence="1">
    <location>
        <begin position="243"/>
        <end position="255"/>
    </location>
</feature>
<feature type="disulfide bond" evidence="1">
    <location>
        <begin position="282"/>
        <end position="293"/>
    </location>
</feature>
<organism>
    <name type="scientific">Beauveria bassiana (strain ARSEF 2860)</name>
    <name type="common">White muscardine disease fungus</name>
    <name type="synonym">Tritirachium shiotae</name>
    <dbReference type="NCBI Taxonomy" id="655819"/>
    <lineage>
        <taxon>Eukaryota</taxon>
        <taxon>Fungi</taxon>
        <taxon>Dikarya</taxon>
        <taxon>Ascomycota</taxon>
        <taxon>Pezizomycotina</taxon>
        <taxon>Sordariomycetes</taxon>
        <taxon>Hypocreomycetidae</taxon>
        <taxon>Hypocreales</taxon>
        <taxon>Cordycipitaceae</taxon>
        <taxon>Beauveria</taxon>
    </lineage>
</organism>
<dbReference type="EMBL" id="JH725150">
    <property type="protein sequence ID" value="EJP70900.1"/>
    <property type="molecule type" value="Genomic_DNA"/>
</dbReference>
<dbReference type="RefSeq" id="XP_008593849.1">
    <property type="nucleotide sequence ID" value="XM_008595627.1"/>
</dbReference>
<dbReference type="STRING" id="655819.J4WMI6"/>
<dbReference type="GeneID" id="19883542"/>
<dbReference type="HOGENOM" id="CLU_930623_0_0_1"/>
<dbReference type="InParanoid" id="J4WMI6"/>
<dbReference type="Proteomes" id="UP000002762">
    <property type="component" value="Unassembled WGS sequence"/>
</dbReference>
<dbReference type="GO" id="GO:0005576">
    <property type="term" value="C:extracellular region"/>
    <property type="evidence" value="ECO:0007669"/>
    <property type="project" value="UniProtKB-KW"/>
</dbReference>
<dbReference type="CDD" id="cd23508">
    <property type="entry name" value="hydrophobin_II"/>
    <property type="match status" value="2"/>
</dbReference>
<dbReference type="Gene3D" id="3.20.120.10">
    <property type="entry name" value="Hydrophobin"/>
    <property type="match status" value="2"/>
</dbReference>
<dbReference type="InterPro" id="IPR010636">
    <property type="entry name" value="Cerato-ulmin_hydrophobin"/>
</dbReference>
<dbReference type="InterPro" id="IPR036686">
    <property type="entry name" value="Hydrophobin_sf"/>
</dbReference>
<dbReference type="PANTHER" id="PTHR42341">
    <property type="entry name" value="HYDROPHOBIN"/>
    <property type="match status" value="1"/>
</dbReference>
<dbReference type="PANTHER" id="PTHR42341:SF1">
    <property type="entry name" value="HYDROPHOBIN"/>
    <property type="match status" value="1"/>
</dbReference>
<dbReference type="Pfam" id="PF06766">
    <property type="entry name" value="Hydrophobin_2"/>
    <property type="match status" value="2"/>
</dbReference>
<dbReference type="SUPFAM" id="SSF101751">
    <property type="entry name" value="Hydrophobin II, HfbII"/>
    <property type="match status" value="2"/>
</dbReference>
<dbReference type="PROSITE" id="PS51257">
    <property type="entry name" value="PROKAR_LIPOPROTEIN"/>
    <property type="match status" value="1"/>
</dbReference>
<accession>J4WMI6</accession>
<reference key="1">
    <citation type="journal article" date="2012" name="Sci. Rep.">
        <title>Genomic perspectives on the evolution of fungal entomopathogenicity in Beauveria bassiana.</title>
        <authorList>
            <person name="Xiao G."/>
            <person name="Ying S.-H."/>
            <person name="Zheng P."/>
            <person name="Wang Z.-L."/>
            <person name="Zhang S."/>
            <person name="Xie X.-Q."/>
            <person name="Shang Y."/>
            <person name="St Leger R.J."/>
            <person name="Zhao G.-P."/>
            <person name="Wang C."/>
            <person name="Feng M.-G."/>
        </authorList>
    </citation>
    <scope>NUCLEOTIDE SEQUENCE [LARGE SCALE GENOMIC DNA]</scope>
    <source>
        <strain>ARSEF 2860</strain>
    </source>
</reference>
<reference key="2">
    <citation type="journal article" date="2023" name="J. Invertebr. Pathol.">
        <title>Only one of three hydrophobins (Hyd1-3) contributes to conidial hydrophobicity and insect pathogenicity of Metarhizium robertsii.</title>
        <authorList>
            <person name="Zhang J.G."/>
            <person name="Xu S.Y."/>
            <person name="Ying S.H."/>
            <person name="Feng M.G."/>
        </authorList>
    </citation>
    <scope>IDENTIFICATION</scope>
</reference>
<reference key="3">
    <citation type="journal article" date="2025" name="Microbiol. Res.">
        <title>Deciphering roles of nine hydrophobins (Hyd1A-F and Hyd2A-C) in the asexual and insect-pathogenic lifecycles of Beauveria bassiana.</title>
        <authorList>
            <person name="Feng J.R."/>
            <person name="Li M."/>
            <person name="Ying S.H."/>
            <person name="Feng M.G."/>
        </authorList>
    </citation>
    <scope>FUNCTION</scope>
    <scope>SUBCELLULAR LOCATION</scope>
    <scope>DISRUPTION PHENOTYPE</scope>
</reference>
<name>HYD2C_BEAB2</name>